<evidence type="ECO:0000255" key="1">
    <source>
        <dbReference type="HAMAP-Rule" id="MF_01302"/>
    </source>
</evidence>
<evidence type="ECO:0000305" key="2"/>
<name>RS8_GEOSW</name>
<organism>
    <name type="scientific">Geobacillus sp. (strain WCH70)</name>
    <dbReference type="NCBI Taxonomy" id="471223"/>
    <lineage>
        <taxon>Bacteria</taxon>
        <taxon>Bacillati</taxon>
        <taxon>Bacillota</taxon>
        <taxon>Bacilli</taxon>
        <taxon>Bacillales</taxon>
        <taxon>Anoxybacillaceae</taxon>
        <taxon>Geobacillus</taxon>
    </lineage>
</organism>
<dbReference type="EMBL" id="CP001638">
    <property type="protein sequence ID" value="ACS23065.1"/>
    <property type="molecule type" value="Genomic_DNA"/>
</dbReference>
<dbReference type="SMR" id="C5D3T1"/>
<dbReference type="STRING" id="471223.GWCH70_0125"/>
<dbReference type="KEGG" id="gwc:GWCH70_0125"/>
<dbReference type="eggNOG" id="COG0096">
    <property type="taxonomic scope" value="Bacteria"/>
</dbReference>
<dbReference type="HOGENOM" id="CLU_098428_0_2_9"/>
<dbReference type="OrthoDB" id="9802617at2"/>
<dbReference type="GO" id="GO:1990904">
    <property type="term" value="C:ribonucleoprotein complex"/>
    <property type="evidence" value="ECO:0007669"/>
    <property type="project" value="UniProtKB-KW"/>
</dbReference>
<dbReference type="GO" id="GO:0005840">
    <property type="term" value="C:ribosome"/>
    <property type="evidence" value="ECO:0007669"/>
    <property type="project" value="UniProtKB-KW"/>
</dbReference>
<dbReference type="GO" id="GO:0019843">
    <property type="term" value="F:rRNA binding"/>
    <property type="evidence" value="ECO:0007669"/>
    <property type="project" value="UniProtKB-UniRule"/>
</dbReference>
<dbReference type="GO" id="GO:0003735">
    <property type="term" value="F:structural constituent of ribosome"/>
    <property type="evidence" value="ECO:0007669"/>
    <property type="project" value="InterPro"/>
</dbReference>
<dbReference type="GO" id="GO:0006412">
    <property type="term" value="P:translation"/>
    <property type="evidence" value="ECO:0007669"/>
    <property type="project" value="UniProtKB-UniRule"/>
</dbReference>
<dbReference type="FunFam" id="3.30.1370.30:FF:000002">
    <property type="entry name" value="30S ribosomal protein S8"/>
    <property type="match status" value="1"/>
</dbReference>
<dbReference type="FunFam" id="3.30.1490.10:FF:000001">
    <property type="entry name" value="30S ribosomal protein S8"/>
    <property type="match status" value="1"/>
</dbReference>
<dbReference type="Gene3D" id="3.30.1370.30">
    <property type="match status" value="1"/>
</dbReference>
<dbReference type="Gene3D" id="3.30.1490.10">
    <property type="match status" value="1"/>
</dbReference>
<dbReference type="HAMAP" id="MF_01302_B">
    <property type="entry name" value="Ribosomal_uS8_B"/>
    <property type="match status" value="1"/>
</dbReference>
<dbReference type="InterPro" id="IPR000630">
    <property type="entry name" value="Ribosomal_uS8"/>
</dbReference>
<dbReference type="InterPro" id="IPR047863">
    <property type="entry name" value="Ribosomal_uS8_CS"/>
</dbReference>
<dbReference type="InterPro" id="IPR035987">
    <property type="entry name" value="Ribosomal_uS8_sf"/>
</dbReference>
<dbReference type="NCBIfam" id="NF001109">
    <property type="entry name" value="PRK00136.1"/>
    <property type="match status" value="1"/>
</dbReference>
<dbReference type="PANTHER" id="PTHR11758">
    <property type="entry name" value="40S RIBOSOMAL PROTEIN S15A"/>
    <property type="match status" value="1"/>
</dbReference>
<dbReference type="Pfam" id="PF00410">
    <property type="entry name" value="Ribosomal_S8"/>
    <property type="match status" value="1"/>
</dbReference>
<dbReference type="SUPFAM" id="SSF56047">
    <property type="entry name" value="Ribosomal protein S8"/>
    <property type="match status" value="1"/>
</dbReference>
<dbReference type="PROSITE" id="PS00053">
    <property type="entry name" value="RIBOSOMAL_S8"/>
    <property type="match status" value="1"/>
</dbReference>
<proteinExistence type="inferred from homology"/>
<protein>
    <recommendedName>
        <fullName evidence="1">Small ribosomal subunit protein uS8</fullName>
    </recommendedName>
    <alternativeName>
        <fullName evidence="2">30S ribosomal protein S8</fullName>
    </alternativeName>
</protein>
<comment type="function">
    <text evidence="1">One of the primary rRNA binding proteins, it binds directly to 16S rRNA central domain where it helps coordinate assembly of the platform of the 30S subunit.</text>
</comment>
<comment type="subunit">
    <text evidence="1">Part of the 30S ribosomal subunit. Contacts proteins S5 and S12.</text>
</comment>
<comment type="similarity">
    <text evidence="1">Belongs to the universal ribosomal protein uS8 family.</text>
</comment>
<accession>C5D3T1</accession>
<feature type="chain" id="PRO_1000214253" description="Small ribosomal subunit protein uS8">
    <location>
        <begin position="1"/>
        <end position="132"/>
    </location>
</feature>
<sequence length="132" mass="14987">MVMTDPIADMLTRIRNANMVRHEKLEVPASKMKREIAEILKREGFIRDVEYIEDNKQGILRIFLKYGPNNERVITGLKRISKPGLRVYVKAHEVPRVLNGLGIAILSTSQGILTDKEARQKGTGGEVIAYVW</sequence>
<gene>
    <name evidence="1" type="primary">rpsH</name>
    <name type="ordered locus">GWCH70_0125</name>
</gene>
<keyword id="KW-0687">Ribonucleoprotein</keyword>
<keyword id="KW-0689">Ribosomal protein</keyword>
<keyword id="KW-0694">RNA-binding</keyword>
<keyword id="KW-0699">rRNA-binding</keyword>
<reference key="1">
    <citation type="submission" date="2009-06" db="EMBL/GenBank/DDBJ databases">
        <title>Complete sequence of chromosome of Geopacillus sp. WCH70.</title>
        <authorList>
            <consortium name="US DOE Joint Genome Institute"/>
            <person name="Lucas S."/>
            <person name="Copeland A."/>
            <person name="Lapidus A."/>
            <person name="Glavina del Rio T."/>
            <person name="Dalin E."/>
            <person name="Tice H."/>
            <person name="Bruce D."/>
            <person name="Goodwin L."/>
            <person name="Pitluck S."/>
            <person name="Chertkov O."/>
            <person name="Brettin T."/>
            <person name="Detter J.C."/>
            <person name="Han C."/>
            <person name="Larimer F."/>
            <person name="Land M."/>
            <person name="Hauser L."/>
            <person name="Kyrpides N."/>
            <person name="Mikhailova N."/>
            <person name="Brumm P."/>
            <person name="Mead D.A."/>
            <person name="Richardson P."/>
        </authorList>
    </citation>
    <scope>NUCLEOTIDE SEQUENCE [LARGE SCALE GENOMIC DNA]</scope>
    <source>
        <strain>WCH70</strain>
    </source>
</reference>